<organism>
    <name type="scientific">Listeria monocytogenes serotype 4b (strain F2365)</name>
    <dbReference type="NCBI Taxonomy" id="265669"/>
    <lineage>
        <taxon>Bacteria</taxon>
        <taxon>Bacillati</taxon>
        <taxon>Bacillota</taxon>
        <taxon>Bacilli</taxon>
        <taxon>Bacillales</taxon>
        <taxon>Listeriaceae</taxon>
        <taxon>Listeria</taxon>
    </lineage>
</organism>
<name>Y1322_LISMF</name>
<sequence length="75" mass="8702">MLEKAKIDRINELSKKKKAGTLTATEKVEQDKLRKEYIKSFRTHMKGTIENTTIIDPNGTDVTPHKVKQLRKNKH</sequence>
<dbReference type="EMBL" id="AE017262">
    <property type="protein sequence ID" value="AAT04097.1"/>
    <property type="molecule type" value="Genomic_DNA"/>
</dbReference>
<dbReference type="RefSeq" id="WP_003734517.1">
    <property type="nucleotide sequence ID" value="NC_002973.6"/>
</dbReference>
<dbReference type="SMR" id="Q720B7"/>
<dbReference type="KEGG" id="lmf:LMOf2365_1322"/>
<dbReference type="HOGENOM" id="CLU_173137_0_2_9"/>
<dbReference type="GO" id="GO:0005737">
    <property type="term" value="C:cytoplasm"/>
    <property type="evidence" value="ECO:0007669"/>
    <property type="project" value="UniProtKB-SubCell"/>
</dbReference>
<dbReference type="Gene3D" id="1.10.287.540">
    <property type="entry name" value="Helix hairpin bin"/>
    <property type="match status" value="1"/>
</dbReference>
<dbReference type="HAMAP" id="MF_01103">
    <property type="entry name" value="UPF0291"/>
    <property type="match status" value="1"/>
</dbReference>
<dbReference type="InterPro" id="IPR009242">
    <property type="entry name" value="DUF896"/>
</dbReference>
<dbReference type="PANTHER" id="PTHR37300">
    <property type="entry name" value="UPF0291 PROTEIN CBO2609/CLC_2481"/>
    <property type="match status" value="1"/>
</dbReference>
<dbReference type="PANTHER" id="PTHR37300:SF1">
    <property type="entry name" value="UPF0291 PROTEIN YNZC"/>
    <property type="match status" value="1"/>
</dbReference>
<dbReference type="Pfam" id="PF05979">
    <property type="entry name" value="DUF896"/>
    <property type="match status" value="1"/>
</dbReference>
<dbReference type="SUPFAM" id="SSF158221">
    <property type="entry name" value="YnzC-like"/>
    <property type="match status" value="1"/>
</dbReference>
<evidence type="ECO:0000255" key="1">
    <source>
        <dbReference type="HAMAP-Rule" id="MF_01103"/>
    </source>
</evidence>
<evidence type="ECO:0000256" key="2">
    <source>
        <dbReference type="SAM" id="MobiDB-lite"/>
    </source>
</evidence>
<keyword id="KW-0963">Cytoplasm</keyword>
<comment type="subcellular location">
    <subcellularLocation>
        <location evidence="1">Cytoplasm</location>
    </subcellularLocation>
</comment>
<comment type="similarity">
    <text evidence="1">Belongs to the UPF0291 family.</text>
</comment>
<gene>
    <name type="ordered locus">LMOf2365_1322</name>
</gene>
<accession>Q720B7</accession>
<proteinExistence type="inferred from homology"/>
<protein>
    <recommendedName>
        <fullName evidence="1">UPF0291 protein LMOf2365_1322</fullName>
    </recommendedName>
</protein>
<reference key="1">
    <citation type="journal article" date="2004" name="Nucleic Acids Res.">
        <title>Whole genome comparisons of serotype 4b and 1/2a strains of the food-borne pathogen Listeria monocytogenes reveal new insights into the core genome components of this species.</title>
        <authorList>
            <person name="Nelson K.E."/>
            <person name="Fouts D.E."/>
            <person name="Mongodin E.F."/>
            <person name="Ravel J."/>
            <person name="DeBoy R.T."/>
            <person name="Kolonay J.F."/>
            <person name="Rasko D.A."/>
            <person name="Angiuoli S.V."/>
            <person name="Gill S.R."/>
            <person name="Paulsen I.T."/>
            <person name="Peterson J.D."/>
            <person name="White O."/>
            <person name="Nelson W.C."/>
            <person name="Nierman W.C."/>
            <person name="Beanan M.J."/>
            <person name="Brinkac L.M."/>
            <person name="Daugherty S.C."/>
            <person name="Dodson R.J."/>
            <person name="Durkin A.S."/>
            <person name="Madupu R."/>
            <person name="Haft D.H."/>
            <person name="Selengut J."/>
            <person name="Van Aken S.E."/>
            <person name="Khouri H.M."/>
            <person name="Fedorova N."/>
            <person name="Forberger H.A."/>
            <person name="Tran B."/>
            <person name="Kathariou S."/>
            <person name="Wonderling L.D."/>
            <person name="Uhlich G.A."/>
            <person name="Bayles D.O."/>
            <person name="Luchansky J.B."/>
            <person name="Fraser C.M."/>
        </authorList>
    </citation>
    <scope>NUCLEOTIDE SEQUENCE [LARGE SCALE GENOMIC DNA]</scope>
    <source>
        <strain>F2365</strain>
    </source>
</reference>
<feature type="chain" id="PRO_0000094979" description="UPF0291 protein LMOf2365_1322">
    <location>
        <begin position="1"/>
        <end position="75"/>
    </location>
</feature>
<feature type="region of interest" description="Disordered" evidence="2">
    <location>
        <begin position="56"/>
        <end position="75"/>
    </location>
</feature>
<feature type="compositionally biased region" description="Basic residues" evidence="2">
    <location>
        <begin position="65"/>
        <end position="75"/>
    </location>
</feature>